<sequence length="361" mass="38407">MAGKSPEEEHPVKTYGLAAHDSSGVLSPFKFSRRATLEDDVRFKVLYCGICHTDLHFAKNEWGISTYPLVPGHEIVGEVTEVGGKVTKVKVGDKVGVGCLVGPCRTCDNCRADLDNYCPKMVLTYASPNVDGTITYGGYSNEMVCNEHFIVRFPENLPLDGGAPLLCAGITVYSPMKYYGFAKPGSHIAVNGLGGLGHVAVKFAKAMGAKVTVISTSEGKKDDALNRLGADAFLLSSNPEALQAATGTFDGILNTISAKHAIIPLLGLLKSHGKLVLLGAPPEPLDLHSAPLLMGRKMVAGSSIGGLKETQEMLDFAGKHNITADIELISADNINTALERLAKGDVRYRFVLDVAKTLKAP</sequence>
<comment type="cofactor">
    <cofactor evidence="2">
        <name>Zn(2+)</name>
        <dbReference type="ChEBI" id="CHEBI:29105"/>
    </cofactor>
    <text evidence="2">Binds 2 Zn(2+) ions per subunit.</text>
</comment>
<comment type="subunit">
    <text evidence="2">Homodimer.</text>
</comment>
<comment type="similarity">
    <text evidence="4">Belongs to the zinc-containing alcohol dehydrogenase family. Class-III subfamily.</text>
</comment>
<name>ADH9_CATRO</name>
<gene>
    <name evidence="3" type="primary">ADH9</name>
</gene>
<reference key="1">
    <citation type="journal article" date="2014" name="Nat. Commun.">
        <title>The seco-iridoid pathway from Catharanthus roseus.</title>
        <authorList>
            <person name="Miettinen K."/>
            <person name="Dong L."/>
            <person name="Navrot N."/>
            <person name="Schneider T."/>
            <person name="Burlat V."/>
            <person name="Pollier J."/>
            <person name="Woittiez L."/>
            <person name="van der Krol S."/>
            <person name="Lugan R."/>
            <person name="Ilc T."/>
            <person name="Verpoorte R."/>
            <person name="Oksman-Caldentey K.M."/>
            <person name="Martinoia E."/>
            <person name="Bouwmeester H."/>
            <person name="Goossens A."/>
            <person name="Memelink J."/>
            <person name="Werck-Reichhart D."/>
        </authorList>
    </citation>
    <scope>NUCLEOTIDE SEQUENCE [MRNA]</scope>
    <source>
        <strain>cv. Little Bright Eyes</strain>
    </source>
</reference>
<feature type="chain" id="PRO_0000446405" description="Alcohol dehydrogenase 9">
    <location>
        <begin position="1"/>
        <end position="361"/>
    </location>
</feature>
<feature type="binding site" evidence="2">
    <location>
        <position position="51"/>
    </location>
    <ligand>
        <name>Zn(2+)</name>
        <dbReference type="ChEBI" id="CHEBI:29105"/>
        <label>1</label>
        <note>catalytic</note>
    </ligand>
</feature>
<feature type="binding site" evidence="2">
    <location>
        <position position="53"/>
    </location>
    <ligand>
        <name>an alcohol</name>
        <dbReference type="ChEBI" id="CHEBI:30879"/>
    </ligand>
</feature>
<feature type="binding site" evidence="2">
    <location>
        <position position="53"/>
    </location>
    <ligand>
        <name>NAD(+)</name>
        <dbReference type="ChEBI" id="CHEBI:57540"/>
    </ligand>
</feature>
<feature type="binding site" evidence="2">
    <location>
        <position position="53"/>
    </location>
    <ligand>
        <name>Zn(2+)</name>
        <dbReference type="ChEBI" id="CHEBI:29105"/>
        <label>1</label>
        <note>catalytic</note>
    </ligand>
</feature>
<feature type="binding site" evidence="1">
    <location>
        <position position="73"/>
    </location>
    <ligand>
        <name>an alcohol</name>
        <dbReference type="ChEBI" id="CHEBI:30879"/>
    </ligand>
</feature>
<feature type="binding site" evidence="2">
    <location>
        <position position="73"/>
    </location>
    <ligand>
        <name>Zn(2+)</name>
        <dbReference type="ChEBI" id="CHEBI:29105"/>
        <label>1</label>
        <note>catalytic</note>
    </ligand>
</feature>
<feature type="binding site" evidence="2">
    <location>
        <position position="104"/>
    </location>
    <ligand>
        <name>Zn(2+)</name>
        <dbReference type="ChEBI" id="CHEBI:29105"/>
        <label>2</label>
    </ligand>
</feature>
<feature type="binding site" evidence="2">
    <location>
        <position position="107"/>
    </location>
    <ligand>
        <name>Zn(2+)</name>
        <dbReference type="ChEBI" id="CHEBI:29105"/>
        <label>2</label>
    </ligand>
</feature>
<feature type="binding site" evidence="2">
    <location>
        <position position="110"/>
    </location>
    <ligand>
        <name>Zn(2+)</name>
        <dbReference type="ChEBI" id="CHEBI:29105"/>
        <label>2</label>
    </ligand>
</feature>
<feature type="binding site" evidence="2">
    <location>
        <position position="118"/>
    </location>
    <ligand>
        <name>Zn(2+)</name>
        <dbReference type="ChEBI" id="CHEBI:29105"/>
        <label>2</label>
    </ligand>
</feature>
<feature type="binding site" evidence="2">
    <location>
        <position position="167"/>
    </location>
    <ligand>
        <name>Zn(2+)</name>
        <dbReference type="ChEBI" id="CHEBI:29105"/>
        <label>1</label>
        <note>catalytic</note>
    </ligand>
</feature>
<feature type="binding site" evidence="2">
    <location>
        <begin position="192"/>
        <end position="197"/>
    </location>
    <ligand>
        <name>NAD(+)</name>
        <dbReference type="ChEBI" id="CHEBI:57540"/>
    </ligand>
</feature>
<feature type="binding site" evidence="2">
    <location>
        <position position="221"/>
    </location>
    <ligand>
        <name>NAD(+)</name>
        <dbReference type="ChEBI" id="CHEBI:57540"/>
    </ligand>
</feature>
<feature type="binding site" evidence="1">
    <location>
        <begin position="278"/>
        <end position="280"/>
    </location>
    <ligand>
        <name>NAD(+)</name>
        <dbReference type="ChEBI" id="CHEBI:57540"/>
    </ligand>
</feature>
<feature type="binding site" evidence="2">
    <location>
        <position position="356"/>
    </location>
    <ligand>
        <name>NAD(+)</name>
        <dbReference type="ChEBI" id="CHEBI:57540"/>
    </ligand>
</feature>
<evidence type="ECO:0000250" key="1">
    <source>
        <dbReference type="UniProtKB" id="P00327"/>
    </source>
</evidence>
<evidence type="ECO:0000250" key="2">
    <source>
        <dbReference type="UniProtKB" id="P06525"/>
    </source>
</evidence>
<evidence type="ECO:0000303" key="3">
    <source>
    </source>
</evidence>
<evidence type="ECO:0000305" key="4"/>
<proteinExistence type="evidence at transcript level"/>
<organism>
    <name type="scientific">Catharanthus roseus</name>
    <name type="common">Madagascar periwinkle</name>
    <name type="synonym">Vinca rosea</name>
    <dbReference type="NCBI Taxonomy" id="4058"/>
    <lineage>
        <taxon>Eukaryota</taxon>
        <taxon>Viridiplantae</taxon>
        <taxon>Streptophyta</taxon>
        <taxon>Embryophyta</taxon>
        <taxon>Tracheophyta</taxon>
        <taxon>Spermatophyta</taxon>
        <taxon>Magnoliopsida</taxon>
        <taxon>eudicotyledons</taxon>
        <taxon>Gunneridae</taxon>
        <taxon>Pentapetalae</taxon>
        <taxon>asterids</taxon>
        <taxon>lamiids</taxon>
        <taxon>Gentianales</taxon>
        <taxon>Apocynaceae</taxon>
        <taxon>Rauvolfioideae</taxon>
        <taxon>Vinceae</taxon>
        <taxon>Catharanthinae</taxon>
        <taxon>Catharanthus</taxon>
    </lineage>
</organism>
<accession>W8JDE0</accession>
<dbReference type="EC" id="1.3.1.-" evidence="4"/>
<dbReference type="EMBL" id="KF302077">
    <property type="protein sequence ID" value="AHK60844.1"/>
    <property type="molecule type" value="mRNA"/>
</dbReference>
<dbReference type="SMR" id="W8JDE0"/>
<dbReference type="GO" id="GO:0016616">
    <property type="term" value="F:oxidoreductase activity, acting on the CH-OH group of donors, NAD or NADP as acceptor"/>
    <property type="evidence" value="ECO:0007669"/>
    <property type="project" value="InterPro"/>
</dbReference>
<dbReference type="GO" id="GO:0008270">
    <property type="term" value="F:zinc ion binding"/>
    <property type="evidence" value="ECO:0007669"/>
    <property type="project" value="InterPro"/>
</dbReference>
<dbReference type="GO" id="GO:0009820">
    <property type="term" value="P:alkaloid metabolic process"/>
    <property type="evidence" value="ECO:0007669"/>
    <property type="project" value="UniProtKB-ARBA"/>
</dbReference>
<dbReference type="CDD" id="cd05283">
    <property type="entry name" value="CAD1"/>
    <property type="match status" value="1"/>
</dbReference>
<dbReference type="FunFam" id="3.40.50.720:FF:000022">
    <property type="entry name" value="Cinnamyl alcohol dehydrogenase"/>
    <property type="match status" value="1"/>
</dbReference>
<dbReference type="FunFam" id="3.90.180.10:FF:000004">
    <property type="entry name" value="probable cinnamyl alcohol dehydrogenase"/>
    <property type="match status" value="1"/>
</dbReference>
<dbReference type="Gene3D" id="3.90.180.10">
    <property type="entry name" value="Medium-chain alcohol dehydrogenases, catalytic domain"/>
    <property type="match status" value="1"/>
</dbReference>
<dbReference type="Gene3D" id="3.40.50.720">
    <property type="entry name" value="NAD(P)-binding Rossmann-like Domain"/>
    <property type="match status" value="1"/>
</dbReference>
<dbReference type="InterPro" id="IPR013149">
    <property type="entry name" value="ADH-like_C"/>
</dbReference>
<dbReference type="InterPro" id="IPR013154">
    <property type="entry name" value="ADH-like_N"/>
</dbReference>
<dbReference type="InterPro" id="IPR002328">
    <property type="entry name" value="ADH_Zn_CS"/>
</dbReference>
<dbReference type="InterPro" id="IPR047109">
    <property type="entry name" value="CAD-like"/>
</dbReference>
<dbReference type="InterPro" id="IPR011032">
    <property type="entry name" value="GroES-like_sf"/>
</dbReference>
<dbReference type="InterPro" id="IPR036291">
    <property type="entry name" value="NAD(P)-bd_dom_sf"/>
</dbReference>
<dbReference type="InterPro" id="IPR020843">
    <property type="entry name" value="PKS_ER"/>
</dbReference>
<dbReference type="PANTHER" id="PTHR42683">
    <property type="entry name" value="ALDEHYDE REDUCTASE"/>
    <property type="match status" value="1"/>
</dbReference>
<dbReference type="Pfam" id="PF08240">
    <property type="entry name" value="ADH_N"/>
    <property type="match status" value="1"/>
</dbReference>
<dbReference type="Pfam" id="PF00107">
    <property type="entry name" value="ADH_zinc_N"/>
    <property type="match status" value="1"/>
</dbReference>
<dbReference type="SMART" id="SM00829">
    <property type="entry name" value="PKS_ER"/>
    <property type="match status" value="1"/>
</dbReference>
<dbReference type="SUPFAM" id="SSF50129">
    <property type="entry name" value="GroES-like"/>
    <property type="match status" value="1"/>
</dbReference>
<dbReference type="SUPFAM" id="SSF51735">
    <property type="entry name" value="NAD(P)-binding Rossmann-fold domains"/>
    <property type="match status" value="1"/>
</dbReference>
<dbReference type="PROSITE" id="PS00059">
    <property type="entry name" value="ADH_ZINC"/>
    <property type="match status" value="1"/>
</dbReference>
<protein>
    <recommendedName>
        <fullName evidence="3">Alcohol dehydrogenase 9</fullName>
        <shortName evidence="3">CrADH9</shortName>
        <ecNumber evidence="4">1.3.1.-</ecNumber>
    </recommendedName>
</protein>
<keyword id="KW-0479">Metal-binding</keyword>
<keyword id="KW-0520">NAD</keyword>
<keyword id="KW-0560">Oxidoreductase</keyword>
<keyword id="KW-0862">Zinc</keyword>